<dbReference type="EMBL" id="CR925677">
    <property type="protein sequence ID" value="CAI28080.1"/>
    <property type="molecule type" value="Genomic_DNA"/>
</dbReference>
<dbReference type="RefSeq" id="WP_011255725.1">
    <property type="nucleotide sequence ID" value="NC_006831.1"/>
</dbReference>
<dbReference type="SMR" id="Q5FFU1"/>
<dbReference type="KEGG" id="erg:ERGA_CDS_06280"/>
<dbReference type="HOGENOM" id="CLU_041575_5_1_5"/>
<dbReference type="OrthoDB" id="9803201at2"/>
<dbReference type="Proteomes" id="UP000000533">
    <property type="component" value="Chromosome"/>
</dbReference>
<dbReference type="GO" id="GO:1990904">
    <property type="term" value="C:ribonucleoprotein complex"/>
    <property type="evidence" value="ECO:0007669"/>
    <property type="project" value="UniProtKB-KW"/>
</dbReference>
<dbReference type="GO" id="GO:0005840">
    <property type="term" value="C:ribosome"/>
    <property type="evidence" value="ECO:0007669"/>
    <property type="project" value="UniProtKB-KW"/>
</dbReference>
<dbReference type="GO" id="GO:0019843">
    <property type="term" value="F:rRNA binding"/>
    <property type="evidence" value="ECO:0007669"/>
    <property type="project" value="UniProtKB-UniRule"/>
</dbReference>
<dbReference type="GO" id="GO:0003735">
    <property type="term" value="F:structural constituent of ribosome"/>
    <property type="evidence" value="ECO:0007669"/>
    <property type="project" value="InterPro"/>
</dbReference>
<dbReference type="GO" id="GO:0006412">
    <property type="term" value="P:translation"/>
    <property type="evidence" value="ECO:0007669"/>
    <property type="project" value="UniProtKB-UniRule"/>
</dbReference>
<dbReference type="Gene3D" id="3.40.1370.10">
    <property type="match status" value="1"/>
</dbReference>
<dbReference type="HAMAP" id="MF_01328_B">
    <property type="entry name" value="Ribosomal_uL4_B"/>
    <property type="match status" value="1"/>
</dbReference>
<dbReference type="InterPro" id="IPR002136">
    <property type="entry name" value="Ribosomal_uL4"/>
</dbReference>
<dbReference type="InterPro" id="IPR013005">
    <property type="entry name" value="Ribosomal_uL4-like"/>
</dbReference>
<dbReference type="InterPro" id="IPR023574">
    <property type="entry name" value="Ribosomal_uL4_dom_sf"/>
</dbReference>
<dbReference type="NCBIfam" id="TIGR03953">
    <property type="entry name" value="rplD_bact"/>
    <property type="match status" value="1"/>
</dbReference>
<dbReference type="PANTHER" id="PTHR10746">
    <property type="entry name" value="50S RIBOSOMAL PROTEIN L4"/>
    <property type="match status" value="1"/>
</dbReference>
<dbReference type="PANTHER" id="PTHR10746:SF6">
    <property type="entry name" value="LARGE RIBOSOMAL SUBUNIT PROTEIN UL4M"/>
    <property type="match status" value="1"/>
</dbReference>
<dbReference type="Pfam" id="PF00573">
    <property type="entry name" value="Ribosomal_L4"/>
    <property type="match status" value="1"/>
</dbReference>
<dbReference type="SUPFAM" id="SSF52166">
    <property type="entry name" value="Ribosomal protein L4"/>
    <property type="match status" value="1"/>
</dbReference>
<proteinExistence type="inferred from homology"/>
<evidence type="ECO:0000255" key="1">
    <source>
        <dbReference type="HAMAP-Rule" id="MF_01328"/>
    </source>
</evidence>
<evidence type="ECO:0000256" key="2">
    <source>
        <dbReference type="SAM" id="MobiDB-lite"/>
    </source>
</evidence>
<evidence type="ECO:0000305" key="3"/>
<feature type="chain" id="PRO_0000242372" description="Large ribosomal subunit protein uL4">
    <location>
        <begin position="1"/>
        <end position="205"/>
    </location>
</feature>
<feature type="region of interest" description="Disordered" evidence="2">
    <location>
        <begin position="56"/>
        <end position="78"/>
    </location>
</feature>
<keyword id="KW-0687">Ribonucleoprotein</keyword>
<keyword id="KW-0689">Ribosomal protein</keyword>
<keyword id="KW-0694">RNA-binding</keyword>
<keyword id="KW-0699">rRNA-binding</keyword>
<comment type="function">
    <text evidence="1">One of the primary rRNA binding proteins, this protein initially binds near the 5'-end of the 23S rRNA. It is important during the early stages of 50S assembly. It makes multiple contacts with different domains of the 23S rRNA in the assembled 50S subunit and ribosome.</text>
</comment>
<comment type="function">
    <text evidence="1">Forms part of the polypeptide exit tunnel.</text>
</comment>
<comment type="subunit">
    <text evidence="1">Part of the 50S ribosomal subunit.</text>
</comment>
<comment type="similarity">
    <text evidence="1">Belongs to the universal ribosomal protein uL4 family.</text>
</comment>
<protein>
    <recommendedName>
        <fullName evidence="1">Large ribosomal subunit protein uL4</fullName>
    </recommendedName>
    <alternativeName>
        <fullName evidence="3">50S ribosomal protein L4</fullName>
    </alternativeName>
</protein>
<organism>
    <name type="scientific">Ehrlichia ruminantium (strain Gardel)</name>
    <dbReference type="NCBI Taxonomy" id="302409"/>
    <lineage>
        <taxon>Bacteria</taxon>
        <taxon>Pseudomonadati</taxon>
        <taxon>Pseudomonadota</taxon>
        <taxon>Alphaproteobacteria</taxon>
        <taxon>Rickettsiales</taxon>
        <taxon>Anaplasmataceae</taxon>
        <taxon>Ehrlichia</taxon>
    </lineage>
</organism>
<sequence>MEVNVINIESQNIGKIDLNPLIFSVNYRPDILKMVVEWQLSKRRVGAHKTKTIGDVSGTTAKPYRQKHTGRARQGSLRSPQFRGGAVIFGPVVRSHAYSLNKKVRNLGLKVALSLKNSCNKLLILDSIDVNFVKTAQVLRFIKNFEHQSFLIIGKDYNKGMMYSCKNLHNVTLLKQIGTNVFDILRHDCVILTVDTVKYLEDRLL</sequence>
<reference key="1">
    <citation type="journal article" date="2006" name="J. Bacteriol.">
        <title>Comparative genomic analysis of three strains of Ehrlichia ruminantium reveals an active process of genome size plasticity.</title>
        <authorList>
            <person name="Frutos R."/>
            <person name="Viari A."/>
            <person name="Ferraz C."/>
            <person name="Morgat A."/>
            <person name="Eychenie S."/>
            <person name="Kandassamy Y."/>
            <person name="Chantal I."/>
            <person name="Bensaid A."/>
            <person name="Coissac E."/>
            <person name="Vachiery N."/>
            <person name="Demaille J."/>
            <person name="Martinez D."/>
        </authorList>
    </citation>
    <scope>NUCLEOTIDE SEQUENCE [LARGE SCALE GENOMIC DNA]</scope>
    <source>
        <strain>Gardel</strain>
    </source>
</reference>
<accession>Q5FFU1</accession>
<name>RL4_EHRRG</name>
<gene>
    <name evidence="1" type="primary">rplD</name>
    <name type="ordered locus">ERGA_CDS_06280</name>
</gene>